<comment type="catalytic activity">
    <reaction>
        <text>holo-[ACP] + malonyl-CoA = malonyl-[ACP] + CoA</text>
        <dbReference type="Rhea" id="RHEA:41792"/>
        <dbReference type="Rhea" id="RHEA-COMP:9623"/>
        <dbReference type="Rhea" id="RHEA-COMP:9685"/>
        <dbReference type="ChEBI" id="CHEBI:57287"/>
        <dbReference type="ChEBI" id="CHEBI:57384"/>
        <dbReference type="ChEBI" id="CHEBI:64479"/>
        <dbReference type="ChEBI" id="CHEBI:78449"/>
        <dbReference type="EC" id="2.3.1.39"/>
    </reaction>
</comment>
<comment type="pathway">
    <text>Lipid metabolism; fatty acid biosynthesis.</text>
</comment>
<comment type="similarity">
    <text evidence="2">Belongs to the FabD family.</text>
</comment>
<feature type="initiator methionine" description="Removed" evidence="1">
    <location>
        <position position="1"/>
    </location>
</feature>
<feature type="chain" id="PRO_0000194219" description="Malonyl CoA-acyl carrier protein transacylase">
    <location>
        <begin position="2"/>
        <end position="309"/>
    </location>
</feature>
<feature type="active site" evidence="1">
    <location>
        <position position="92"/>
    </location>
</feature>
<feature type="active site" evidence="1">
    <location>
        <position position="201"/>
    </location>
</feature>
<feature type="strand" evidence="3">
    <location>
        <begin position="4"/>
        <end position="8"/>
    </location>
</feature>
<feature type="turn" evidence="3">
    <location>
        <begin position="16"/>
        <end position="19"/>
    </location>
</feature>
<feature type="helix" evidence="3">
    <location>
        <begin position="20"/>
        <end position="25"/>
    </location>
</feature>
<feature type="helix" evidence="3">
    <location>
        <begin position="28"/>
        <end position="40"/>
    </location>
</feature>
<feature type="helix" evidence="3">
    <location>
        <begin position="44"/>
        <end position="50"/>
    </location>
</feature>
<feature type="helix" evidence="3">
    <location>
        <begin position="53"/>
        <end position="56"/>
    </location>
</feature>
<feature type="helix" evidence="3">
    <location>
        <begin position="59"/>
        <end position="79"/>
    </location>
</feature>
<feature type="strand" evidence="3">
    <location>
        <begin position="88"/>
        <end position="91"/>
    </location>
</feature>
<feature type="helix" evidence="3">
    <location>
        <begin position="93"/>
        <end position="101"/>
    </location>
</feature>
<feature type="helix" evidence="3">
    <location>
        <begin position="107"/>
        <end position="123"/>
    </location>
</feature>
<feature type="strand" evidence="3">
    <location>
        <begin position="129"/>
        <end position="137"/>
    </location>
</feature>
<feature type="helix" evidence="3">
    <location>
        <begin position="140"/>
        <end position="151"/>
    </location>
</feature>
<feature type="strand" evidence="3">
    <location>
        <begin position="156"/>
        <end position="163"/>
    </location>
</feature>
<feature type="strand" evidence="3">
    <location>
        <begin position="166"/>
        <end position="172"/>
    </location>
</feature>
<feature type="helix" evidence="3">
    <location>
        <begin position="173"/>
        <end position="185"/>
    </location>
</feature>
<feature type="strand" evidence="3">
    <location>
        <begin position="189"/>
        <end position="193"/>
    </location>
</feature>
<feature type="helix" evidence="3">
    <location>
        <begin position="203"/>
        <end position="205"/>
    </location>
</feature>
<feature type="helix" evidence="3">
    <location>
        <begin position="206"/>
        <end position="217"/>
    </location>
</feature>
<feature type="strand" evidence="3">
    <location>
        <begin position="228"/>
        <end position="230"/>
    </location>
</feature>
<feature type="turn" evidence="3">
    <location>
        <begin position="231"/>
        <end position="234"/>
    </location>
</feature>
<feature type="helix" evidence="3">
    <location>
        <begin position="240"/>
        <end position="250"/>
    </location>
</feature>
<feature type="helix" evidence="3">
    <location>
        <begin position="257"/>
        <end position="266"/>
    </location>
</feature>
<feature type="strand" evidence="3">
    <location>
        <begin position="271"/>
        <end position="274"/>
    </location>
</feature>
<feature type="strand" evidence="3">
    <location>
        <begin position="276"/>
        <end position="279"/>
    </location>
</feature>
<feature type="helix" evidence="3">
    <location>
        <begin position="280"/>
        <end position="288"/>
    </location>
</feature>
<feature type="strand" evidence="3">
    <location>
        <begin position="293"/>
        <end position="296"/>
    </location>
</feature>
<feature type="helix" evidence="3">
    <location>
        <begin position="300"/>
        <end position="307"/>
    </location>
</feature>
<gene>
    <name type="primary">fabD</name>
    <name type="ordered locus">STM1194</name>
</gene>
<organism>
    <name type="scientific">Salmonella typhimurium (strain LT2 / SGSC1412 / ATCC 700720)</name>
    <dbReference type="NCBI Taxonomy" id="99287"/>
    <lineage>
        <taxon>Bacteria</taxon>
        <taxon>Pseudomonadati</taxon>
        <taxon>Pseudomonadota</taxon>
        <taxon>Gammaproteobacteria</taxon>
        <taxon>Enterobacterales</taxon>
        <taxon>Enterobacteriaceae</taxon>
        <taxon>Salmonella</taxon>
    </lineage>
</organism>
<protein>
    <recommendedName>
        <fullName>Malonyl CoA-acyl carrier protein transacylase</fullName>
        <shortName>MCT</shortName>
        <ecNumber>2.3.1.39</ecNumber>
    </recommendedName>
</protein>
<evidence type="ECO:0000250" key="1"/>
<evidence type="ECO:0000305" key="2"/>
<evidence type="ECO:0007829" key="3">
    <source>
        <dbReference type="PDB" id="3H0P"/>
    </source>
</evidence>
<proteinExistence type="evidence at protein level"/>
<dbReference type="EC" id="2.3.1.39"/>
<dbReference type="EMBL" id="AF044668">
    <property type="protein sequence ID" value="AAC38649.1"/>
    <property type="molecule type" value="Genomic_DNA"/>
</dbReference>
<dbReference type="EMBL" id="AE006468">
    <property type="protein sequence ID" value="AAL20123.1"/>
    <property type="molecule type" value="Genomic_DNA"/>
</dbReference>
<dbReference type="RefSeq" id="NP_460164.1">
    <property type="nucleotide sequence ID" value="NC_003197.2"/>
</dbReference>
<dbReference type="RefSeq" id="WP_000191343.1">
    <property type="nucleotide sequence ID" value="NC_003197.2"/>
</dbReference>
<dbReference type="PDB" id="3H0P">
    <property type="method" value="X-ray"/>
    <property type="resolution" value="2.00 A"/>
    <property type="chains" value="A/B=1-309"/>
</dbReference>
<dbReference type="PDBsum" id="3H0P"/>
<dbReference type="SMR" id="O85140"/>
<dbReference type="STRING" id="99287.STM1194"/>
<dbReference type="PaxDb" id="99287-STM1194"/>
<dbReference type="GeneID" id="1252712"/>
<dbReference type="KEGG" id="stm:STM1194"/>
<dbReference type="PATRIC" id="fig|99287.12.peg.1263"/>
<dbReference type="HOGENOM" id="CLU_030558_0_0_6"/>
<dbReference type="OMA" id="AANYNCP"/>
<dbReference type="PhylomeDB" id="O85140"/>
<dbReference type="BioCyc" id="SENT99287:STM1194-MONOMER"/>
<dbReference type="UniPathway" id="UPA00094"/>
<dbReference type="EvolutionaryTrace" id="O85140"/>
<dbReference type="Proteomes" id="UP000001014">
    <property type="component" value="Chromosome"/>
</dbReference>
<dbReference type="GO" id="GO:0005829">
    <property type="term" value="C:cytosol"/>
    <property type="evidence" value="ECO:0000318"/>
    <property type="project" value="GO_Central"/>
</dbReference>
<dbReference type="GO" id="GO:0004314">
    <property type="term" value="F:[acyl-carrier-protein] S-malonyltransferase activity"/>
    <property type="evidence" value="ECO:0000318"/>
    <property type="project" value="GO_Central"/>
</dbReference>
<dbReference type="GO" id="GO:0006633">
    <property type="term" value="P:fatty acid biosynthetic process"/>
    <property type="evidence" value="ECO:0000318"/>
    <property type="project" value="GO_Central"/>
</dbReference>
<dbReference type="FunFam" id="3.30.70.250:FF:000001">
    <property type="entry name" value="Malonyl CoA-acyl carrier protein transacylase"/>
    <property type="match status" value="1"/>
</dbReference>
<dbReference type="Gene3D" id="3.30.70.250">
    <property type="entry name" value="Malonyl-CoA ACP transacylase, ACP-binding"/>
    <property type="match status" value="1"/>
</dbReference>
<dbReference type="Gene3D" id="3.40.366.10">
    <property type="entry name" value="Malonyl-Coenzyme A Acyl Carrier Protein, domain 2"/>
    <property type="match status" value="1"/>
</dbReference>
<dbReference type="InterPro" id="IPR001227">
    <property type="entry name" value="Ac_transferase_dom_sf"/>
</dbReference>
<dbReference type="InterPro" id="IPR014043">
    <property type="entry name" value="Acyl_transferase_dom"/>
</dbReference>
<dbReference type="InterPro" id="IPR016035">
    <property type="entry name" value="Acyl_Trfase/lysoPLipase"/>
</dbReference>
<dbReference type="InterPro" id="IPR050858">
    <property type="entry name" value="Mal-CoA-ACP_Trans/PKS_FabD"/>
</dbReference>
<dbReference type="InterPro" id="IPR024925">
    <property type="entry name" value="Malonyl_CoA-ACP_transAc"/>
</dbReference>
<dbReference type="InterPro" id="IPR004410">
    <property type="entry name" value="Malonyl_CoA-ACP_transAc_FabD"/>
</dbReference>
<dbReference type="InterPro" id="IPR016036">
    <property type="entry name" value="Malonyl_transacylase_ACP-bd"/>
</dbReference>
<dbReference type="NCBIfam" id="TIGR00128">
    <property type="entry name" value="fabD"/>
    <property type="match status" value="1"/>
</dbReference>
<dbReference type="PANTHER" id="PTHR42681">
    <property type="entry name" value="MALONYL-COA-ACYL CARRIER PROTEIN TRANSACYLASE, MITOCHONDRIAL"/>
    <property type="match status" value="1"/>
</dbReference>
<dbReference type="PANTHER" id="PTHR42681:SF1">
    <property type="entry name" value="MALONYL-COA-ACYL CARRIER PROTEIN TRANSACYLASE, MITOCHONDRIAL"/>
    <property type="match status" value="1"/>
</dbReference>
<dbReference type="Pfam" id="PF00698">
    <property type="entry name" value="Acyl_transf_1"/>
    <property type="match status" value="1"/>
</dbReference>
<dbReference type="PIRSF" id="PIRSF000446">
    <property type="entry name" value="Mct"/>
    <property type="match status" value="1"/>
</dbReference>
<dbReference type="SMART" id="SM00827">
    <property type="entry name" value="PKS_AT"/>
    <property type="match status" value="1"/>
</dbReference>
<dbReference type="SUPFAM" id="SSF52151">
    <property type="entry name" value="FabD/lysophospholipase-like"/>
    <property type="match status" value="1"/>
</dbReference>
<dbReference type="SUPFAM" id="SSF55048">
    <property type="entry name" value="Probable ACP-binding domain of malonyl-CoA ACP transacylase"/>
    <property type="match status" value="1"/>
</dbReference>
<name>FABD_SALTY</name>
<sequence length="309" mass="32405">MTQFAFVFPGQGSQSVGMLAEMAANYPIVEETFAEASAALGYDLWALTQQGPAEELNKTWQTQPALLTASVALWRVWQQQGGKMPALMAGHSLGEYSALVCAGVINFADAVRLVEMRGKFMQEAVPEGTGGMSAIIGLDDASIAKACEESAEGQVVSPVNFNSPGQVVIAGHKEAVERAGAACKAAGAKRALPLPVSVPSHCALMKPAADKLAVELAKITFSAPTVPVVNNVDVKCETDAAAIRDALVRQLYNPVQWTKSVEFIAAQGVEHLYEVGPGKVLTGLTKRIVDTLTASALNEPAALSAALTQ</sequence>
<reference key="1">
    <citation type="journal article" date="1998" name="J. Bacteriol.">
        <title>Transcriptional analysis of essential genes of the Escherichia coli fatty acid biosynthesis gene cluster by functional replacement with the analogous Salmonella typhimurium gene cluster.</title>
        <authorList>
            <person name="Zhang Y."/>
            <person name="Cronan J.E. Jr."/>
        </authorList>
    </citation>
    <scope>NUCLEOTIDE SEQUENCE [GENOMIC DNA]</scope>
    <source>
        <strain>LT2</strain>
    </source>
</reference>
<reference key="2">
    <citation type="journal article" date="2001" name="Nature">
        <title>Complete genome sequence of Salmonella enterica serovar Typhimurium LT2.</title>
        <authorList>
            <person name="McClelland M."/>
            <person name="Sanderson K.E."/>
            <person name="Spieth J."/>
            <person name="Clifton S.W."/>
            <person name="Latreille P."/>
            <person name="Courtney L."/>
            <person name="Porwollik S."/>
            <person name="Ali J."/>
            <person name="Dante M."/>
            <person name="Du F."/>
            <person name="Hou S."/>
            <person name="Layman D."/>
            <person name="Leonard S."/>
            <person name="Nguyen C."/>
            <person name="Scott K."/>
            <person name="Holmes A."/>
            <person name="Grewal N."/>
            <person name="Mulvaney E."/>
            <person name="Ryan E."/>
            <person name="Sun H."/>
            <person name="Florea L."/>
            <person name="Miller W."/>
            <person name="Stoneking T."/>
            <person name="Nhan M."/>
            <person name="Waterston R."/>
            <person name="Wilson R.K."/>
        </authorList>
    </citation>
    <scope>NUCLEOTIDE SEQUENCE [LARGE SCALE GENOMIC DNA]</scope>
    <source>
        <strain>LT2 / SGSC1412 / ATCC 700720</strain>
    </source>
</reference>
<keyword id="KW-0002">3D-structure</keyword>
<keyword id="KW-0012">Acyltransferase</keyword>
<keyword id="KW-0275">Fatty acid biosynthesis</keyword>
<keyword id="KW-0276">Fatty acid metabolism</keyword>
<keyword id="KW-0444">Lipid biosynthesis</keyword>
<keyword id="KW-0443">Lipid metabolism</keyword>
<keyword id="KW-1185">Reference proteome</keyword>
<keyword id="KW-0808">Transferase</keyword>
<accession>O85140</accession>